<organism>
    <name type="scientific">Rotavirus X (isolate RVX/Human/Bangladesh/NADRV-B219/2002/GXP[X])</name>
    <name type="common">RV ADRV-N</name>
    <name type="synonym">Rotavirus (isolate novel adult diarrhea rotavirus-B219)</name>
    <dbReference type="NCBI Taxonomy" id="348136"/>
    <lineage>
        <taxon>Viruses</taxon>
        <taxon>Riboviria</taxon>
        <taxon>Orthornavirae</taxon>
        <taxon>Duplornaviricota</taxon>
        <taxon>Resentoviricetes</taxon>
        <taxon>Reovirales</taxon>
        <taxon>Sedoreoviridae</taxon>
        <taxon>Rotavirus</taxon>
    </lineage>
</organism>
<protein>
    <recommendedName>
        <fullName>Protein VP3</fullName>
    </recommendedName>
    <domain>
        <recommendedName>
            <fullName>mRNA guanylyltransferase</fullName>
            <ecNumber>2.7.7.50</ecNumber>
        </recommendedName>
    </domain>
    <domain>
        <recommendedName>
            <fullName>mRNA (guanine-N(7))-methyltransferase</fullName>
            <ecNumber>2.1.1.56</ecNumber>
        </recommendedName>
    </domain>
</protein>
<evidence type="ECO:0000250" key="1"/>
<evidence type="ECO:0000305" key="2"/>
<feature type="chain" id="PRO_0000369836" description="Protein VP3">
    <location>
        <begin position="1"/>
        <end position="719"/>
    </location>
</feature>
<proteinExistence type="evidence at transcript level"/>
<reference key="1">
    <citation type="journal article" date="2008" name="J. Med. Virol.">
        <title>Whole genomic characterization of a human rotavirus strain B219 belonging to a novel group of the genus Rotavirus.</title>
        <authorList>
            <person name="Nagashima S."/>
            <person name="Kobayashi N."/>
            <person name="Ishino M."/>
            <person name="Alam M.M."/>
            <person name="Ahmed M.U."/>
            <person name="Paul S.K."/>
            <person name="Ganesh B."/>
            <person name="Chawla-Sarkar M."/>
            <person name="Krishnan T."/>
            <person name="Naik T.N."/>
            <person name="Wang Y.-H."/>
        </authorList>
    </citation>
    <scope>NUCLEOTIDE SEQUENCE [MRNA]</scope>
</reference>
<accession>A9Q1K9</accession>
<organismHost>
    <name type="scientific">Homo sapiens</name>
    <name type="common">Human</name>
    <dbReference type="NCBI Taxonomy" id="9606"/>
</organismHost>
<comment type="function">
    <text evidence="1">Multifunctional enzyme involved in mRNA capping. Catalyzes the formation of the 5' cap structure on the viral plus-strand transcripts. Specifically binds to GTP and displays guanylyltransferase and methyltransferase activities. Together with VP1 polymerase, forms an enzyme complex positioned near the channels situated at each of the five-fold vertices of the core. Following infection, the outermost layer of the virus is lost, leaving a double-layered particle (DLP) made up of the core and VP6 shell. VP1 then catalyzes the transcription of fully conservative plus-strand genomic RNAs that are capped by VP3 and extruded through the DLP's channels into the cytoplasm where they function as mRNAs for translation of viral proteins. DLPs probably have an RNA triphosphatase activity as well, whereas open cores don't (By similarity).</text>
</comment>
<comment type="catalytic activity">
    <reaction>
        <text>a 5'-end diphospho-ribonucleoside in mRNA + GTP + H(+) = a 5'-end (5'-triphosphoguanosine)-ribonucleoside in mRNA + diphosphate</text>
        <dbReference type="Rhea" id="RHEA:67012"/>
        <dbReference type="Rhea" id="RHEA-COMP:17165"/>
        <dbReference type="Rhea" id="RHEA-COMP:17166"/>
        <dbReference type="ChEBI" id="CHEBI:15378"/>
        <dbReference type="ChEBI" id="CHEBI:33019"/>
        <dbReference type="ChEBI" id="CHEBI:37565"/>
        <dbReference type="ChEBI" id="CHEBI:167616"/>
        <dbReference type="ChEBI" id="CHEBI:167617"/>
        <dbReference type="EC" id="2.7.7.50"/>
    </reaction>
</comment>
<comment type="catalytic activity">
    <reaction>
        <text>a 5'-end (5'-triphosphoguanosine)-ribonucleoside in mRNA + S-adenosyl-L-methionine = a 5'-end (N(7)-methyl 5'-triphosphoguanosine)-ribonucleoside in mRNA + S-adenosyl-L-homocysteine</text>
        <dbReference type="Rhea" id="RHEA:67008"/>
        <dbReference type="Rhea" id="RHEA-COMP:17166"/>
        <dbReference type="Rhea" id="RHEA-COMP:17167"/>
        <dbReference type="ChEBI" id="CHEBI:57856"/>
        <dbReference type="ChEBI" id="CHEBI:59789"/>
        <dbReference type="ChEBI" id="CHEBI:156461"/>
        <dbReference type="ChEBI" id="CHEBI:167617"/>
        <dbReference type="EC" id="2.1.1.56"/>
    </reaction>
</comment>
<comment type="subunit">
    <text evidence="2">Interacts with VP1. Interacts with VP2.</text>
</comment>
<comment type="subcellular location">
    <subcellularLocation>
        <location evidence="2">Virion</location>
    </subcellularLocation>
    <text evidence="2">Attached inside the inner capsid as a minor component. Also found in spherical cytoplasmic structures, called virus factories, that appear early after infection and are the site of viral replication and packaging (Potential).</text>
</comment>
<comment type="similarity">
    <text evidence="2">Belongs to the rotavirus VP3 family.</text>
</comment>
<name>VP3_ROTB2</name>
<sequence length="719" mass="84556">MAKLIIINSEKGEKVETHEDIFKLSNLQQREIYAITNERTKSILLNQTFYTILDIENEPKDRVAFDSYNSLFPTSIFSYNRQDRLFGTCNHVLDNNIHYSFALFDSMVDNLSTYLPNDWNIIKIPDSIDYPIGNDLLFYVFDNLVHMTIDQFVNSEEKQMNTVPKCKESQDRIKEVFTDIMSHLYMPAIDYDPQSYNYRISRREIGNLVRDQVFSLVKGHIHLIGPEMESLRNIIMFLHAGNSITFHTIDTSKKSNYIKELEFNKKTKLTMANVLINQRKNMNNFFKGLIKHYMTYGIPNKVYYIGAYPSYWLELITWVPFNIITYDPKYRHVDNDKIIWHDKLFDRNDIETIESKSYIYIDIRTDIRKLDMTKKQRIFKEEDDMIVEIATKLASKQCTVMFKRKIFPGNNMSFGDPLFHPKLTQLGREYYNCITTIVSPSIYKESELYSLLLSARSNNVSNYVYGGSKFDQSSIVNYNSTVIALYSLSNTVNSLETIEHAIKFNHIITFPHRTDRGDWRNIEELNNLSPFQNKKRQLEFEDWSIDPKNYAMKFGCEIVSESVFLQLGHSRALIPDLYNHIISIRMEMPLFYPDRFFSHIGIRQPSIFKRDSYMTSRLSAYISRQLTHSIDLSVLKKNHFEGYSGHLIAIETSFSSLVFTMSPYRWLIRAKKSLTKSKIRDKFKIGDGQPHTREEFENTYDYLKINRLVNSTFHSLLLG</sequence>
<dbReference type="EC" id="2.7.7.50"/>
<dbReference type="EC" id="2.1.1.56"/>
<dbReference type="EMBL" id="EF453357">
    <property type="protein sequence ID" value="ABR32124.1"/>
    <property type="molecule type" value="mRNA"/>
</dbReference>
<dbReference type="Proteomes" id="UP000174021">
    <property type="component" value="Genome"/>
</dbReference>
<dbReference type="GO" id="GO:0019013">
    <property type="term" value="C:viral nucleocapsid"/>
    <property type="evidence" value="ECO:0007669"/>
    <property type="project" value="InterPro"/>
</dbReference>
<dbReference type="GO" id="GO:0005525">
    <property type="term" value="F:GTP binding"/>
    <property type="evidence" value="ECO:0007669"/>
    <property type="project" value="UniProtKB-KW"/>
</dbReference>
<dbReference type="GO" id="GO:0004482">
    <property type="term" value="F:mRNA 5'-cap (guanine-N7-)-methyltransferase activity"/>
    <property type="evidence" value="ECO:0007669"/>
    <property type="project" value="UniProtKB-EC"/>
</dbReference>
<dbReference type="GO" id="GO:0004484">
    <property type="term" value="F:mRNA guanylyltransferase activity"/>
    <property type="evidence" value="ECO:0007669"/>
    <property type="project" value="UniProtKB-EC"/>
</dbReference>
<dbReference type="GO" id="GO:0003723">
    <property type="term" value="F:RNA binding"/>
    <property type="evidence" value="ECO:0007669"/>
    <property type="project" value="UniProtKB-KW"/>
</dbReference>
<dbReference type="GO" id="GO:0016032">
    <property type="term" value="P:viral process"/>
    <property type="evidence" value="ECO:0007669"/>
    <property type="project" value="InterPro"/>
</dbReference>
<dbReference type="InterPro" id="IPR011181">
    <property type="entry name" value="VP3_Rotav"/>
</dbReference>
<dbReference type="Pfam" id="PF06929">
    <property type="entry name" value="Rotavirus_VP3"/>
    <property type="match status" value="1"/>
</dbReference>
<keyword id="KW-0342">GTP-binding</keyword>
<keyword id="KW-0489">Methyltransferase</keyword>
<keyword id="KW-0506">mRNA capping</keyword>
<keyword id="KW-0507">mRNA processing</keyword>
<keyword id="KW-0511">Multifunctional enzyme</keyword>
<keyword id="KW-0547">Nucleotide-binding</keyword>
<keyword id="KW-0548">Nucleotidyltransferase</keyword>
<keyword id="KW-0694">RNA-binding</keyword>
<keyword id="KW-0949">S-adenosyl-L-methionine</keyword>
<keyword id="KW-0808">Transferase</keyword>
<keyword id="KW-0946">Virion</keyword>